<evidence type="ECO:0000255" key="1">
    <source>
        <dbReference type="HAMAP-Rule" id="MF_00727"/>
    </source>
</evidence>
<comment type="function">
    <text evidence="1">Probably plays a role in the assembly of the spore coat proteins by catalyzing epsilon-(gamma-glutamyl)lysine cross-links.</text>
</comment>
<comment type="catalytic activity">
    <reaction evidence="1">
        <text>L-glutaminyl-[protein] + L-lysyl-[protein] = [protein]-L-lysyl-N(6)-5-L-glutamyl-[protein] + NH4(+)</text>
        <dbReference type="Rhea" id="RHEA:54816"/>
        <dbReference type="Rhea" id="RHEA-COMP:9752"/>
        <dbReference type="Rhea" id="RHEA-COMP:10207"/>
        <dbReference type="Rhea" id="RHEA-COMP:14005"/>
        <dbReference type="ChEBI" id="CHEBI:28938"/>
        <dbReference type="ChEBI" id="CHEBI:29969"/>
        <dbReference type="ChEBI" id="CHEBI:30011"/>
        <dbReference type="ChEBI" id="CHEBI:138370"/>
        <dbReference type="EC" id="2.3.2.13"/>
    </reaction>
</comment>
<comment type="similarity">
    <text evidence="1">Belongs to the bacillus TGase family.</text>
</comment>
<dbReference type="EC" id="2.3.2.13" evidence="1"/>
<dbReference type="EMBL" id="CP000001">
    <property type="protein sequence ID" value="AAU16541.1"/>
    <property type="molecule type" value="Genomic_DNA"/>
</dbReference>
<dbReference type="RefSeq" id="WP_000635324.1">
    <property type="nucleotide sequence ID" value="NZ_CP009968.1"/>
</dbReference>
<dbReference type="SMR" id="Q635W3"/>
<dbReference type="KEGG" id="bcz:BCE33L3723"/>
<dbReference type="PATRIC" id="fig|288681.22.peg.1689"/>
<dbReference type="Proteomes" id="UP000002612">
    <property type="component" value="Chromosome"/>
</dbReference>
<dbReference type="GO" id="GO:0003810">
    <property type="term" value="F:protein-glutamine gamma-glutamyltransferase activity"/>
    <property type="evidence" value="ECO:0007669"/>
    <property type="project" value="UniProtKB-UniRule"/>
</dbReference>
<dbReference type="GO" id="GO:0030435">
    <property type="term" value="P:sporulation resulting in formation of a cellular spore"/>
    <property type="evidence" value="ECO:0007669"/>
    <property type="project" value="UniProtKB-UniRule"/>
</dbReference>
<dbReference type="HAMAP" id="MF_00727">
    <property type="entry name" value="Tgl"/>
    <property type="match status" value="1"/>
</dbReference>
<dbReference type="InterPro" id="IPR020916">
    <property type="entry name" value="Gln_gamma-glutamylTfrase_bac"/>
</dbReference>
<dbReference type="NCBIfam" id="NF002869">
    <property type="entry name" value="PRK03187.1"/>
    <property type="match status" value="1"/>
</dbReference>
<dbReference type="Pfam" id="PF20085">
    <property type="entry name" value="TGL"/>
    <property type="match status" value="1"/>
</dbReference>
<organism>
    <name type="scientific">Bacillus cereus (strain ZK / E33L)</name>
    <dbReference type="NCBI Taxonomy" id="288681"/>
    <lineage>
        <taxon>Bacteria</taxon>
        <taxon>Bacillati</taxon>
        <taxon>Bacillota</taxon>
        <taxon>Bacilli</taxon>
        <taxon>Bacillales</taxon>
        <taxon>Bacillaceae</taxon>
        <taxon>Bacillus</taxon>
        <taxon>Bacillus cereus group</taxon>
    </lineage>
</organism>
<accession>Q635W3</accession>
<sequence>MIVIGRSIVHPYITNEYEPFAAEKQQILSIMAGNQEIYSFRTSDELSFDLNLRVNIITSALELFQSGFQFRTFQQSFCNPQYWKRTSLGGFELLPNIPPSIAIQDIFKNGKLYGTECATAMIIIFYKALLSLYEEETFNRLFANLLLYTWDYDQDLKLITKTGGDLVPGDLVYFKNPQVNPATIEWQGENTIYLGNFFFYGHGVGVKTKEEIIYALNERRVPYAFISAFLTDTITRIDSRLMSYHASPSTPQTSIGFIPIRDDAIVATVGNTTTVY</sequence>
<gene>
    <name evidence="1" type="primary">tgl</name>
    <name type="ordered locus">BCE33L3723</name>
</gene>
<name>TGL_BACCZ</name>
<proteinExistence type="inferred from homology"/>
<feature type="chain" id="PRO_1000045888" description="Protein-glutamine gamma-glutamyltransferase">
    <location>
        <begin position="1"/>
        <end position="276"/>
    </location>
</feature>
<keyword id="KW-0012">Acyltransferase</keyword>
<keyword id="KW-0749">Sporulation</keyword>
<keyword id="KW-0808">Transferase</keyword>
<reference key="1">
    <citation type="journal article" date="2006" name="J. Bacteriol.">
        <title>Pathogenomic sequence analysis of Bacillus cereus and Bacillus thuringiensis isolates closely related to Bacillus anthracis.</title>
        <authorList>
            <person name="Han C.S."/>
            <person name="Xie G."/>
            <person name="Challacombe J.F."/>
            <person name="Altherr M.R."/>
            <person name="Bhotika S.S."/>
            <person name="Bruce D."/>
            <person name="Campbell C.S."/>
            <person name="Campbell M.L."/>
            <person name="Chen J."/>
            <person name="Chertkov O."/>
            <person name="Cleland C."/>
            <person name="Dimitrijevic M."/>
            <person name="Doggett N.A."/>
            <person name="Fawcett J.J."/>
            <person name="Glavina T."/>
            <person name="Goodwin L.A."/>
            <person name="Hill K.K."/>
            <person name="Hitchcock P."/>
            <person name="Jackson P.J."/>
            <person name="Keim P."/>
            <person name="Kewalramani A.R."/>
            <person name="Longmire J."/>
            <person name="Lucas S."/>
            <person name="Malfatti S."/>
            <person name="McMurry K."/>
            <person name="Meincke L.J."/>
            <person name="Misra M."/>
            <person name="Moseman B.L."/>
            <person name="Mundt M."/>
            <person name="Munk A.C."/>
            <person name="Okinaka R.T."/>
            <person name="Parson-Quintana B."/>
            <person name="Reilly L.P."/>
            <person name="Richardson P."/>
            <person name="Robinson D.L."/>
            <person name="Rubin E."/>
            <person name="Saunders E."/>
            <person name="Tapia R."/>
            <person name="Tesmer J.G."/>
            <person name="Thayer N."/>
            <person name="Thompson L.S."/>
            <person name="Tice H."/>
            <person name="Ticknor L.O."/>
            <person name="Wills P.L."/>
            <person name="Brettin T.S."/>
            <person name="Gilna P."/>
        </authorList>
    </citation>
    <scope>NUCLEOTIDE SEQUENCE [LARGE SCALE GENOMIC DNA]</scope>
    <source>
        <strain>ZK / E33L</strain>
    </source>
</reference>
<protein>
    <recommendedName>
        <fullName evidence="1">Protein-glutamine gamma-glutamyltransferase</fullName>
        <ecNumber evidence="1">2.3.2.13</ecNumber>
    </recommendedName>
    <alternativeName>
        <fullName evidence="1">Transglutaminase</fullName>
        <shortName evidence="1">TGase</shortName>
    </alternativeName>
</protein>